<keyword id="KW-0067">ATP-binding</keyword>
<keyword id="KW-0963">Cytoplasm</keyword>
<keyword id="KW-0418">Kinase</keyword>
<keyword id="KW-0460">Magnesium</keyword>
<keyword id="KW-0479">Metal-binding</keyword>
<keyword id="KW-0546">Nucleotide metabolism</keyword>
<keyword id="KW-0547">Nucleotide-binding</keyword>
<keyword id="KW-0597">Phosphoprotein</keyword>
<keyword id="KW-0808">Transferase</keyword>
<dbReference type="EC" id="2.7.4.6" evidence="1"/>
<dbReference type="EMBL" id="CP000117">
    <property type="protein sequence ID" value="ABA23031.1"/>
    <property type="molecule type" value="Genomic_DNA"/>
</dbReference>
<dbReference type="RefSeq" id="WP_011320146.1">
    <property type="nucleotide sequence ID" value="NC_007413.1"/>
</dbReference>
<dbReference type="SMR" id="Q3M7K5"/>
<dbReference type="STRING" id="240292.Ava_3424"/>
<dbReference type="GeneID" id="58726210"/>
<dbReference type="KEGG" id="ava:Ava_3424"/>
<dbReference type="eggNOG" id="COG0105">
    <property type="taxonomic scope" value="Bacteria"/>
</dbReference>
<dbReference type="HOGENOM" id="CLU_060216_6_3_3"/>
<dbReference type="Proteomes" id="UP000002533">
    <property type="component" value="Chromosome"/>
</dbReference>
<dbReference type="GO" id="GO:0005737">
    <property type="term" value="C:cytoplasm"/>
    <property type="evidence" value="ECO:0007669"/>
    <property type="project" value="UniProtKB-SubCell"/>
</dbReference>
<dbReference type="GO" id="GO:0005524">
    <property type="term" value="F:ATP binding"/>
    <property type="evidence" value="ECO:0007669"/>
    <property type="project" value="UniProtKB-UniRule"/>
</dbReference>
<dbReference type="GO" id="GO:0046872">
    <property type="term" value="F:metal ion binding"/>
    <property type="evidence" value="ECO:0007669"/>
    <property type="project" value="UniProtKB-KW"/>
</dbReference>
<dbReference type="GO" id="GO:0004550">
    <property type="term" value="F:nucleoside diphosphate kinase activity"/>
    <property type="evidence" value="ECO:0007669"/>
    <property type="project" value="UniProtKB-UniRule"/>
</dbReference>
<dbReference type="GO" id="GO:0006241">
    <property type="term" value="P:CTP biosynthetic process"/>
    <property type="evidence" value="ECO:0007669"/>
    <property type="project" value="UniProtKB-UniRule"/>
</dbReference>
<dbReference type="GO" id="GO:0006183">
    <property type="term" value="P:GTP biosynthetic process"/>
    <property type="evidence" value="ECO:0007669"/>
    <property type="project" value="UniProtKB-UniRule"/>
</dbReference>
<dbReference type="GO" id="GO:0006228">
    <property type="term" value="P:UTP biosynthetic process"/>
    <property type="evidence" value="ECO:0007669"/>
    <property type="project" value="UniProtKB-UniRule"/>
</dbReference>
<dbReference type="CDD" id="cd04413">
    <property type="entry name" value="NDPk_I"/>
    <property type="match status" value="1"/>
</dbReference>
<dbReference type="FunFam" id="3.30.70.141:FF:000002">
    <property type="entry name" value="Nucleoside diphosphate kinase"/>
    <property type="match status" value="1"/>
</dbReference>
<dbReference type="Gene3D" id="3.30.70.141">
    <property type="entry name" value="Nucleoside diphosphate kinase-like domain"/>
    <property type="match status" value="1"/>
</dbReference>
<dbReference type="HAMAP" id="MF_00451">
    <property type="entry name" value="NDP_kinase"/>
    <property type="match status" value="1"/>
</dbReference>
<dbReference type="InterPro" id="IPR034907">
    <property type="entry name" value="NDK-like_dom"/>
</dbReference>
<dbReference type="InterPro" id="IPR036850">
    <property type="entry name" value="NDK-like_dom_sf"/>
</dbReference>
<dbReference type="InterPro" id="IPR001564">
    <property type="entry name" value="Nucleoside_diP_kinase"/>
</dbReference>
<dbReference type="InterPro" id="IPR023005">
    <property type="entry name" value="Nucleoside_diP_kinase_AS"/>
</dbReference>
<dbReference type="NCBIfam" id="NF001908">
    <property type="entry name" value="PRK00668.1"/>
    <property type="match status" value="1"/>
</dbReference>
<dbReference type="PANTHER" id="PTHR11349">
    <property type="entry name" value="NUCLEOSIDE DIPHOSPHATE KINASE"/>
    <property type="match status" value="1"/>
</dbReference>
<dbReference type="Pfam" id="PF00334">
    <property type="entry name" value="NDK"/>
    <property type="match status" value="1"/>
</dbReference>
<dbReference type="PRINTS" id="PR01243">
    <property type="entry name" value="NUCDPKINASE"/>
</dbReference>
<dbReference type="SMART" id="SM00562">
    <property type="entry name" value="NDK"/>
    <property type="match status" value="1"/>
</dbReference>
<dbReference type="SUPFAM" id="SSF54919">
    <property type="entry name" value="Nucleoside diphosphate kinase, NDK"/>
    <property type="match status" value="1"/>
</dbReference>
<dbReference type="PROSITE" id="PS00469">
    <property type="entry name" value="NDPK"/>
    <property type="match status" value="1"/>
</dbReference>
<dbReference type="PROSITE" id="PS51374">
    <property type="entry name" value="NDPK_LIKE"/>
    <property type="match status" value="1"/>
</dbReference>
<name>NDK_TRIV2</name>
<reference key="1">
    <citation type="journal article" date="2014" name="Stand. Genomic Sci.">
        <title>Complete genome sequence of Anabaena variabilis ATCC 29413.</title>
        <authorList>
            <person name="Thiel T."/>
            <person name="Pratte B.S."/>
            <person name="Zhong J."/>
            <person name="Goodwin L."/>
            <person name="Copeland A."/>
            <person name="Lucas S."/>
            <person name="Han C."/>
            <person name="Pitluck S."/>
            <person name="Land M.L."/>
            <person name="Kyrpides N.C."/>
            <person name="Woyke T."/>
        </authorList>
    </citation>
    <scope>NUCLEOTIDE SEQUENCE [LARGE SCALE GENOMIC DNA]</scope>
    <source>
        <strain>ATCC 29413 / PCC 7937</strain>
    </source>
</reference>
<comment type="function">
    <text evidence="1">Major role in the synthesis of nucleoside triphosphates other than ATP. The ATP gamma phosphate is transferred to the NDP beta phosphate via a ping-pong mechanism, using a phosphorylated active-site intermediate.</text>
</comment>
<comment type="catalytic activity">
    <reaction evidence="1">
        <text>a 2'-deoxyribonucleoside 5'-diphosphate + ATP = a 2'-deoxyribonucleoside 5'-triphosphate + ADP</text>
        <dbReference type="Rhea" id="RHEA:44640"/>
        <dbReference type="ChEBI" id="CHEBI:30616"/>
        <dbReference type="ChEBI" id="CHEBI:61560"/>
        <dbReference type="ChEBI" id="CHEBI:73316"/>
        <dbReference type="ChEBI" id="CHEBI:456216"/>
        <dbReference type="EC" id="2.7.4.6"/>
    </reaction>
</comment>
<comment type="catalytic activity">
    <reaction evidence="1">
        <text>a ribonucleoside 5'-diphosphate + ATP = a ribonucleoside 5'-triphosphate + ADP</text>
        <dbReference type="Rhea" id="RHEA:18113"/>
        <dbReference type="ChEBI" id="CHEBI:30616"/>
        <dbReference type="ChEBI" id="CHEBI:57930"/>
        <dbReference type="ChEBI" id="CHEBI:61557"/>
        <dbReference type="ChEBI" id="CHEBI:456216"/>
        <dbReference type="EC" id="2.7.4.6"/>
    </reaction>
</comment>
<comment type="cofactor">
    <cofactor evidence="1">
        <name>Mg(2+)</name>
        <dbReference type="ChEBI" id="CHEBI:18420"/>
    </cofactor>
</comment>
<comment type="subunit">
    <text evidence="1">Homotetramer.</text>
</comment>
<comment type="subcellular location">
    <subcellularLocation>
        <location evidence="1">Cytoplasm</location>
    </subcellularLocation>
</comment>
<comment type="similarity">
    <text evidence="1">Belongs to the NDK family.</text>
</comment>
<protein>
    <recommendedName>
        <fullName evidence="1">Nucleoside diphosphate kinase</fullName>
        <shortName evidence="1">NDK</shortName>
        <shortName evidence="1">NDP kinase</shortName>
        <ecNumber evidence="1">2.7.4.6</ecNumber>
    </recommendedName>
    <alternativeName>
        <fullName evidence="1">Nucleoside-2-P kinase</fullName>
    </alternativeName>
</protein>
<evidence type="ECO:0000255" key="1">
    <source>
        <dbReference type="HAMAP-Rule" id="MF_00451"/>
    </source>
</evidence>
<organism>
    <name type="scientific">Trichormus variabilis (strain ATCC 29413 / PCC 7937)</name>
    <name type="common">Anabaena variabilis</name>
    <dbReference type="NCBI Taxonomy" id="240292"/>
    <lineage>
        <taxon>Bacteria</taxon>
        <taxon>Bacillati</taxon>
        <taxon>Cyanobacteriota</taxon>
        <taxon>Cyanophyceae</taxon>
        <taxon>Nostocales</taxon>
        <taxon>Nostocaceae</taxon>
        <taxon>Trichormus</taxon>
    </lineage>
</organism>
<accession>Q3M7K5</accession>
<sequence>MERTFLAIKPDGVQRGLVGEIIRRFETKGFTLVGLKFLQVSKELAEQHYGVHRERPFFPSLVEFITSGPVVAMVWEGDGVIASARKIIGATNPLTAEPGTIRGDFGINIGRNLIHGSDAPETAQKEVSLWFTDAELVNWQPHLTPWLHE</sequence>
<gene>
    <name evidence="1" type="primary">ndk</name>
    <name type="ordered locus">Ava_3424</name>
</gene>
<proteinExistence type="inferred from homology"/>
<feature type="chain" id="PRO_0000242491" description="Nucleoside diphosphate kinase">
    <location>
        <begin position="1"/>
        <end position="149"/>
    </location>
</feature>
<feature type="active site" description="Pros-phosphohistidine intermediate" evidence="1">
    <location>
        <position position="115"/>
    </location>
</feature>
<feature type="binding site" evidence="1">
    <location>
        <position position="9"/>
    </location>
    <ligand>
        <name>ATP</name>
        <dbReference type="ChEBI" id="CHEBI:30616"/>
    </ligand>
</feature>
<feature type="binding site" evidence="1">
    <location>
        <position position="57"/>
    </location>
    <ligand>
        <name>ATP</name>
        <dbReference type="ChEBI" id="CHEBI:30616"/>
    </ligand>
</feature>
<feature type="binding site" evidence="1">
    <location>
        <position position="85"/>
    </location>
    <ligand>
        <name>ATP</name>
        <dbReference type="ChEBI" id="CHEBI:30616"/>
    </ligand>
</feature>
<feature type="binding site" evidence="1">
    <location>
        <position position="91"/>
    </location>
    <ligand>
        <name>ATP</name>
        <dbReference type="ChEBI" id="CHEBI:30616"/>
    </ligand>
</feature>
<feature type="binding site" evidence="1">
    <location>
        <position position="102"/>
    </location>
    <ligand>
        <name>ATP</name>
        <dbReference type="ChEBI" id="CHEBI:30616"/>
    </ligand>
</feature>
<feature type="binding site" evidence="1">
    <location>
        <position position="112"/>
    </location>
    <ligand>
        <name>ATP</name>
        <dbReference type="ChEBI" id="CHEBI:30616"/>
    </ligand>
</feature>